<sequence length="657" mass="73577">MTQLAIGKPAPLGAHYDGQGVNFTLFSAHAERVELCVFDANGQEHRYDLPGHSGDIWHGYLPDARPGLRYGYRVHGPWQPAEGHRFNPAKLLIDPCARQIDGEFKDNPLLHAGHNEPDYRDNAAIAPKCVVVVDHYDWEDDAPPRTPWGSTIIYEAHVKGLTYLHPEIPVEIRGTYKALGHPVMINYLKQLGITALELLPVAQFASEPRLQRMGLSNYWGYNPVAMFALHPAYACSPETALDEFRDAIKALHKAGIEVILDIVLNHSAELDLDGPLFSLRGIDNRSYYWIREDGDYHNWTGCGNTLNLSHPAVVDYASACLRYWVETCHVDGFRFDLAAVMGRTPEFRQDAPLFTAIQNCPVLSQVKLIAEPWDIAPGGYQVGNFPPLFAEWNDHFRDAARRFWLHYDLPLGAFAGRFAASSDVFKRNGRLPSAAINLVTAHDGFTLRDCVCFNHKHNEANGEENRDGTNNNYSNNHGKEGLGGSLDLVERRRDSIHALLTTLLLSQGTPMLLAGDEHGHSQHGNNNAYCQDNQLTWLDWSQASSGLTAFTAALIHLRKRIPALVENRWWEEGDGNVRWLNRYAQPLSTDEWQNGPKQLQILLSDRFLIAINATLEVTEIVLPAGEWHAIPPFAGEDNPVITAVWQGPAHGLCVFQR</sequence>
<keyword id="KW-0002">3D-structure</keyword>
<keyword id="KW-0119">Carbohydrate metabolism</keyword>
<keyword id="KW-0321">Glycogen metabolism</keyword>
<keyword id="KW-0326">Glycosidase</keyword>
<keyword id="KW-0378">Hydrolase</keyword>
<keyword id="KW-1185">Reference proteome</keyword>
<accession>P15067</accession>
<accession>P76693</accession>
<accession>Q2M795</accession>
<proteinExistence type="evidence at protein level"/>
<comment type="function">
    <text evidence="3 5 6">Removes maltotriose and maltotetraose chains that are attached by 1,6-alpha-linkage to the limit dextrin main chain, generating a debranched limit dextrin. Shows only very little activity with native glycogen.</text>
</comment>
<comment type="catalytic activity">
    <reaction evidence="1 3 5 6">
        <text>Hydrolysis of (1-&gt;6)-alpha-D-glucosidic linkages to branches with degrees of polymerization of three or four glucose residues in limit dextrin.</text>
        <dbReference type="EC" id="3.2.1.196"/>
    </reaction>
</comment>
<comment type="activity regulation">
    <text evidence="5">Inhibited by iodoacetate, p-chloromercuribenzoate, HgCl(2), cupric sulfate and ammonium sulfate.</text>
</comment>
<comment type="biophysicochemical properties">
    <phDependence>
        <text evidence="5">Optimum pH is 5.6 to 6.4.</text>
    </phDependence>
    <temperatureDependence>
        <text evidence="5">Optimum temperature is 45-50 degrees Celsius.</text>
    </temperatureDependence>
</comment>
<comment type="pathway">
    <text evidence="1 3 5">Glycan degradation; glycogen degradation.</text>
</comment>
<comment type="subunit">
    <text evidence="4">Monomer.</text>
</comment>
<comment type="disruption phenotype">
    <text evidence="3">Disruption of the gene leads to overproduction of glycogen containing short external chains.</text>
</comment>
<comment type="similarity">
    <text evidence="1 9">Belongs to the glycosyl hydrolase 13 family.</text>
</comment>
<comment type="sequence caution" evidence="9">
    <conflict type="erroneous termination">
        <sequence resource="EMBL-CDS" id="AAA98735"/>
    </conflict>
    <text>Truncated C-terminus.</text>
</comment>
<reference key="1">
    <citation type="journal article" date="1997" name="Science">
        <title>The complete genome sequence of Escherichia coli K-12.</title>
        <authorList>
            <person name="Blattner F.R."/>
            <person name="Plunkett G. III"/>
            <person name="Bloch C.A."/>
            <person name="Perna N.T."/>
            <person name="Burland V."/>
            <person name="Riley M."/>
            <person name="Collado-Vides J."/>
            <person name="Glasner J.D."/>
            <person name="Rode C.K."/>
            <person name="Mayhew G.F."/>
            <person name="Gregor J."/>
            <person name="Davis N.W."/>
            <person name="Kirkpatrick H.A."/>
            <person name="Goeden M.A."/>
            <person name="Rose D.J."/>
            <person name="Mau B."/>
            <person name="Shao Y."/>
        </authorList>
    </citation>
    <scope>NUCLEOTIDE SEQUENCE [LARGE SCALE GENOMIC DNA]</scope>
    <source>
        <strain>K12 / MG1655 / ATCC 47076</strain>
    </source>
</reference>
<reference key="2">
    <citation type="journal article" date="2006" name="Mol. Syst. Biol.">
        <title>Highly accurate genome sequences of Escherichia coli K-12 strains MG1655 and W3110.</title>
        <authorList>
            <person name="Hayashi K."/>
            <person name="Morooka N."/>
            <person name="Yamamoto Y."/>
            <person name="Fujita K."/>
            <person name="Isono K."/>
            <person name="Choi S."/>
            <person name="Ohtsubo E."/>
            <person name="Baba T."/>
            <person name="Wanner B.L."/>
            <person name="Mori H."/>
            <person name="Horiuchi T."/>
        </authorList>
    </citation>
    <scope>NUCLEOTIDE SEQUENCE [LARGE SCALE GENOMIC DNA]</scope>
    <source>
        <strain>K12 / W3110 / ATCC 27325 / DSM 5911</strain>
    </source>
</reference>
<reference key="3">
    <citation type="journal article" date="1988" name="Gene">
        <title>Analysis of the Escherichia coli glycogen gene cluster suggests that catabolic enzymes are encoded among the biosynthetic genes.</title>
        <authorList>
            <person name="Romeo T."/>
            <person name="Kumar A."/>
            <person name="Preiss J."/>
        </authorList>
    </citation>
    <scope>NUCLEOTIDE SEQUENCE [GENOMIC DNA] OF 1-590</scope>
    <source>
        <strain>K12</strain>
    </source>
</reference>
<reference key="4">
    <citation type="journal article" date="1976" name="Biochim. Biophys. Acta">
        <title>Purification and properties of a debranching enzyme from Escherichia coli.</title>
        <authorList>
            <person name="Jeanningros R."/>
            <person name="Creuzet-Sigal N."/>
            <person name="Frixon C."/>
            <person name="Cattaneo J."/>
        </authorList>
    </citation>
    <scope>FUNCTION</scope>
    <scope>CATALYTIC ACTIVITY</scope>
    <scope>ACTIVITY REGULATION</scope>
    <scope>BIOPHYSICOCHEMICAL PROPERTIES</scope>
    <scope>PATHWAY</scope>
</reference>
<reference key="5">
    <citation type="journal article" date="1996" name="J. Bacteriol.">
        <title>Coordinate genetic regulation of glycogen catabolism and biosynthesis in Escherichia coli via the CsrA gene product.</title>
        <authorList>
            <person name="Yang H."/>
            <person name="Liu M.-Y."/>
            <person name="Romeo T."/>
        </authorList>
    </citation>
    <scope>FUNCTION</scope>
    <scope>CATALYTIC ACTIVITY</scope>
    <source>
        <strain>K12</strain>
    </source>
</reference>
<reference key="6">
    <citation type="journal article" date="2005" name="J. Bacteriol.">
        <title>Role of the Escherichia coli glgX gene in glycogen metabolism.</title>
        <authorList>
            <person name="Dauvillee D."/>
            <person name="Kinderf I.S."/>
            <person name="Li Z."/>
            <person name="Kosar-Hashemi B."/>
            <person name="Samuel M.S."/>
            <person name="Rampling L."/>
            <person name="Ball S."/>
            <person name="Morell M.K."/>
        </authorList>
    </citation>
    <scope>FUNCTION</scope>
    <scope>CATALYTIC ACTIVITY</scope>
    <scope>PATHWAY</scope>
    <scope>DISRUPTION PHENOTYPE</scope>
    <source>
        <strain>BW25113</strain>
    </source>
</reference>
<reference key="7">
    <citation type="journal article" date="2010" name="Proteins">
        <title>Structural rationale for the short branched substrate specificity of the glycogen debranching enzyme GlgX.</title>
        <authorList>
            <person name="Song H.N."/>
            <person name="Jung T.Y."/>
            <person name="Park J.T."/>
            <person name="Park B.C."/>
            <person name="Myung P.K."/>
            <person name="Boos W."/>
            <person name="Woo E.J."/>
            <person name="Park K.H."/>
        </authorList>
    </citation>
    <scope>X-RAY CRYSTALLOGRAPHY (2.25 ANGSTROMS)</scope>
    <scope>SUBUNIT</scope>
    <scope>ACTIVE SITE</scope>
    <source>
        <strain>K12</strain>
    </source>
</reference>
<organism>
    <name type="scientific">Escherichia coli (strain K12)</name>
    <dbReference type="NCBI Taxonomy" id="83333"/>
    <lineage>
        <taxon>Bacteria</taxon>
        <taxon>Pseudomonadati</taxon>
        <taxon>Pseudomonadota</taxon>
        <taxon>Gammaproteobacteria</taxon>
        <taxon>Enterobacterales</taxon>
        <taxon>Enterobacteriaceae</taxon>
        <taxon>Escherichia</taxon>
    </lineage>
</organism>
<evidence type="ECO:0000255" key="1">
    <source>
        <dbReference type="HAMAP-Rule" id="MF_01248"/>
    </source>
</evidence>
<evidence type="ECO:0000256" key="2">
    <source>
        <dbReference type="SAM" id="MobiDB-lite"/>
    </source>
</evidence>
<evidence type="ECO:0000269" key="3">
    <source>
    </source>
</evidence>
<evidence type="ECO:0000269" key="4">
    <source>
    </source>
</evidence>
<evidence type="ECO:0000269" key="5">
    <source>
    </source>
</evidence>
<evidence type="ECO:0000269" key="6">
    <source>
    </source>
</evidence>
<evidence type="ECO:0000303" key="7">
    <source>
    </source>
</evidence>
<evidence type="ECO:0000303" key="8">
    <source>
    </source>
</evidence>
<evidence type="ECO:0000305" key="9"/>
<evidence type="ECO:0000305" key="10">
    <source>
    </source>
</evidence>
<evidence type="ECO:0007829" key="11">
    <source>
        <dbReference type="PDB" id="2WSK"/>
    </source>
</evidence>
<gene>
    <name evidence="1 7 8" type="primary">glgX</name>
    <name type="synonym">glyX</name>
    <name type="ordered locus">b3431</name>
    <name type="ordered locus">JW3394</name>
</gene>
<name>GLGX_ECOLI</name>
<protein>
    <recommendedName>
        <fullName evidence="1 8">Glycogen debranching enzyme</fullName>
        <ecNumber evidence="1 3 5 6">3.2.1.196</ecNumber>
    </recommendedName>
    <alternativeName>
        <fullName>Glycogen operon protein GlgX</fullName>
    </alternativeName>
    <alternativeName>
        <fullName evidence="1 9">Limit dextrin alpha-1,6-maltotetraose-hydrolase</fullName>
    </alternativeName>
</protein>
<dbReference type="EC" id="3.2.1.196" evidence="1 3 5 6"/>
<dbReference type="EMBL" id="J01616">
    <property type="protein sequence ID" value="AAA98735.1"/>
    <property type="status" value="ALT_SEQ"/>
    <property type="molecule type" value="Genomic_DNA"/>
</dbReference>
<dbReference type="EMBL" id="U18997">
    <property type="protein sequence ID" value="AAA58229.1"/>
    <property type="molecule type" value="Genomic_DNA"/>
</dbReference>
<dbReference type="EMBL" id="U00096">
    <property type="protein sequence ID" value="AAC76456.1"/>
    <property type="molecule type" value="Genomic_DNA"/>
</dbReference>
<dbReference type="EMBL" id="AP009048">
    <property type="protein sequence ID" value="BAE77861.1"/>
    <property type="molecule type" value="Genomic_DNA"/>
</dbReference>
<dbReference type="PIR" id="B65139">
    <property type="entry name" value="BVECGX"/>
</dbReference>
<dbReference type="RefSeq" id="NP_417889.1">
    <property type="nucleotide sequence ID" value="NC_000913.3"/>
</dbReference>
<dbReference type="RefSeq" id="WP_000192523.1">
    <property type="nucleotide sequence ID" value="NZ_SSZK01000008.1"/>
</dbReference>
<dbReference type="PDB" id="2WSK">
    <property type="method" value="X-ray"/>
    <property type="resolution" value="2.25 A"/>
    <property type="chains" value="A=1-657"/>
</dbReference>
<dbReference type="PDBsum" id="2WSK"/>
<dbReference type="SMR" id="P15067"/>
<dbReference type="BioGRID" id="4263517">
    <property type="interactions" value="31"/>
</dbReference>
<dbReference type="BioGRID" id="852250">
    <property type="interactions" value="6"/>
</dbReference>
<dbReference type="FunCoup" id="P15067">
    <property type="interactions" value="290"/>
</dbReference>
<dbReference type="IntAct" id="P15067">
    <property type="interactions" value="15"/>
</dbReference>
<dbReference type="STRING" id="511145.b3431"/>
<dbReference type="CAZy" id="CBM48">
    <property type="family name" value="Carbohydrate-Binding Module Family 48"/>
</dbReference>
<dbReference type="CAZy" id="GH13">
    <property type="family name" value="Glycoside Hydrolase Family 13"/>
</dbReference>
<dbReference type="jPOST" id="P15067"/>
<dbReference type="PaxDb" id="511145-b3431"/>
<dbReference type="EnsemblBacteria" id="AAC76456">
    <property type="protein sequence ID" value="AAC76456"/>
    <property type="gene ID" value="b3431"/>
</dbReference>
<dbReference type="GeneID" id="75202276"/>
<dbReference type="GeneID" id="947941"/>
<dbReference type="KEGG" id="ecj:JW3394"/>
<dbReference type="KEGG" id="eco:b3431"/>
<dbReference type="KEGG" id="ecoc:C3026_18600"/>
<dbReference type="PATRIC" id="fig|511145.12.peg.3528"/>
<dbReference type="EchoBASE" id="EB0376"/>
<dbReference type="eggNOG" id="COG1523">
    <property type="taxonomic scope" value="Bacteria"/>
</dbReference>
<dbReference type="HOGENOM" id="CLU_011725_1_1_6"/>
<dbReference type="InParanoid" id="P15067"/>
<dbReference type="OMA" id="INHFQWG"/>
<dbReference type="OrthoDB" id="3236218at2"/>
<dbReference type="PhylomeDB" id="P15067"/>
<dbReference type="BioCyc" id="EcoCyc:EG10381-MONOMER"/>
<dbReference type="BioCyc" id="MetaCyc:EG10381-MONOMER"/>
<dbReference type="BRENDA" id="3.2.1.196">
    <property type="organism ID" value="2026"/>
</dbReference>
<dbReference type="UniPathway" id="UPA00165"/>
<dbReference type="EvolutionaryTrace" id="P15067"/>
<dbReference type="PRO" id="PR:P15067"/>
<dbReference type="Proteomes" id="UP000000625">
    <property type="component" value="Chromosome"/>
</dbReference>
<dbReference type="GO" id="GO:0004135">
    <property type="term" value="F:amylo-alpha-1,6-glucosidase activity"/>
    <property type="evidence" value="ECO:0000314"/>
    <property type="project" value="EcoCyc"/>
</dbReference>
<dbReference type="GO" id="GO:0004133">
    <property type="term" value="F:glycogen debranching enzyme activity"/>
    <property type="evidence" value="ECO:0000315"/>
    <property type="project" value="EcoCyc"/>
</dbReference>
<dbReference type="GO" id="GO:0006974">
    <property type="term" value="P:DNA damage response"/>
    <property type="evidence" value="ECO:0000270"/>
    <property type="project" value="EcoliWiki"/>
</dbReference>
<dbReference type="GO" id="GO:0005980">
    <property type="term" value="P:glycogen catabolic process"/>
    <property type="evidence" value="ECO:0000315"/>
    <property type="project" value="EcoCyc"/>
</dbReference>
<dbReference type="CDD" id="cd11326">
    <property type="entry name" value="AmyAc_Glg_debranch"/>
    <property type="match status" value="1"/>
</dbReference>
<dbReference type="CDD" id="cd02856">
    <property type="entry name" value="E_set_GDE_Isoamylase_N"/>
    <property type="match status" value="1"/>
</dbReference>
<dbReference type="FunFam" id="2.60.40.10:FF:000468">
    <property type="entry name" value="Glycogen debranching enzyme"/>
    <property type="match status" value="1"/>
</dbReference>
<dbReference type="FunFam" id="3.20.20.80:FF:000031">
    <property type="entry name" value="Glycogen debranching enzyme"/>
    <property type="match status" value="1"/>
</dbReference>
<dbReference type="Gene3D" id="3.20.20.80">
    <property type="entry name" value="Glycosidases"/>
    <property type="match status" value="1"/>
</dbReference>
<dbReference type="Gene3D" id="2.60.40.1180">
    <property type="entry name" value="Golgi alpha-mannosidase II"/>
    <property type="match status" value="1"/>
</dbReference>
<dbReference type="Gene3D" id="2.60.40.10">
    <property type="entry name" value="Immunoglobulins"/>
    <property type="match status" value="1"/>
</dbReference>
<dbReference type="HAMAP" id="MF_01248">
    <property type="entry name" value="GlgX"/>
    <property type="match status" value="1"/>
</dbReference>
<dbReference type="InterPro" id="IPR040784">
    <property type="entry name" value="GlgX_C"/>
</dbReference>
<dbReference type="InterPro" id="IPR044505">
    <property type="entry name" value="GlgX_Isoamylase_N_E_set"/>
</dbReference>
<dbReference type="InterPro" id="IPR006047">
    <property type="entry name" value="Glyco_hydro_13_cat_dom"/>
</dbReference>
<dbReference type="InterPro" id="IPR004193">
    <property type="entry name" value="Glyco_hydro_13_N"/>
</dbReference>
<dbReference type="InterPro" id="IPR013780">
    <property type="entry name" value="Glyco_hydro_b"/>
</dbReference>
<dbReference type="InterPro" id="IPR022844">
    <property type="entry name" value="Glycogen_debranch_bac"/>
</dbReference>
<dbReference type="InterPro" id="IPR011837">
    <property type="entry name" value="Glycogen_debranch_GlgX"/>
</dbReference>
<dbReference type="InterPro" id="IPR017853">
    <property type="entry name" value="Glycoside_hydrolase_SF"/>
</dbReference>
<dbReference type="InterPro" id="IPR013783">
    <property type="entry name" value="Ig-like_fold"/>
</dbReference>
<dbReference type="InterPro" id="IPR014756">
    <property type="entry name" value="Ig_E-set"/>
</dbReference>
<dbReference type="NCBIfam" id="TIGR02100">
    <property type="entry name" value="glgX_debranch"/>
    <property type="match status" value="1"/>
</dbReference>
<dbReference type="NCBIfam" id="NF002983">
    <property type="entry name" value="PRK03705.1"/>
    <property type="match status" value="1"/>
</dbReference>
<dbReference type="PANTHER" id="PTHR43002">
    <property type="entry name" value="GLYCOGEN DEBRANCHING ENZYME"/>
    <property type="match status" value="1"/>
</dbReference>
<dbReference type="Pfam" id="PF00128">
    <property type="entry name" value="Alpha-amylase"/>
    <property type="match status" value="1"/>
</dbReference>
<dbReference type="Pfam" id="PF02922">
    <property type="entry name" value="CBM_48"/>
    <property type="match status" value="1"/>
</dbReference>
<dbReference type="Pfam" id="PF18390">
    <property type="entry name" value="GlgX_C"/>
    <property type="match status" value="1"/>
</dbReference>
<dbReference type="SMART" id="SM00642">
    <property type="entry name" value="Aamy"/>
    <property type="match status" value="1"/>
</dbReference>
<dbReference type="SUPFAM" id="SSF51445">
    <property type="entry name" value="(Trans)glycosidases"/>
    <property type="match status" value="1"/>
</dbReference>
<dbReference type="SUPFAM" id="SSF81296">
    <property type="entry name" value="E set domains"/>
    <property type="match status" value="1"/>
</dbReference>
<feature type="chain" id="PRO_0000054297" description="Glycogen debranching enzyme">
    <location>
        <begin position="1"/>
        <end position="657"/>
    </location>
</feature>
<feature type="region of interest" description="Disordered" evidence="2">
    <location>
        <begin position="458"/>
        <end position="479"/>
    </location>
</feature>
<feature type="compositionally biased region" description="Basic and acidic residues" evidence="2">
    <location>
        <begin position="458"/>
        <end position="467"/>
    </location>
</feature>
<feature type="active site" description="Nucleophile" evidence="1 10">
    <location>
        <position position="336"/>
    </location>
</feature>
<feature type="active site" description="Proton donor" evidence="1 10">
    <location>
        <position position="371"/>
    </location>
</feature>
<feature type="site" description="Transition state stabilizer" evidence="1 10">
    <location>
        <position position="443"/>
    </location>
</feature>
<feature type="sequence conflict" description="In Ref. 3; AAA98735." evidence="9" ref="3">
    <original>Y</original>
    <variation>YY</variation>
    <location>
        <position position="288"/>
    </location>
</feature>
<feature type="strand" evidence="11">
    <location>
        <begin position="11"/>
        <end position="16"/>
    </location>
</feature>
<feature type="strand" evidence="11">
    <location>
        <begin position="18"/>
        <end position="26"/>
    </location>
</feature>
<feature type="strand" evidence="11">
    <location>
        <begin position="31"/>
        <end position="38"/>
    </location>
</feature>
<feature type="strand" evidence="11">
    <location>
        <begin position="44"/>
        <end position="48"/>
    </location>
</feature>
<feature type="strand" evidence="11">
    <location>
        <begin position="51"/>
        <end position="53"/>
    </location>
</feature>
<feature type="strand" evidence="11">
    <location>
        <begin position="56"/>
        <end position="62"/>
    </location>
</feature>
<feature type="strand" evidence="11">
    <location>
        <begin position="69"/>
        <end position="75"/>
    </location>
</feature>
<feature type="helix" evidence="11">
    <location>
        <begin position="80"/>
        <end position="82"/>
    </location>
</feature>
<feature type="strand" evidence="11">
    <location>
        <begin position="100"/>
        <end position="102"/>
    </location>
</feature>
<feature type="helix" evidence="11">
    <location>
        <begin position="108"/>
        <end position="110"/>
    </location>
</feature>
<feature type="strand" evidence="11">
    <location>
        <begin position="114"/>
        <end position="116"/>
    </location>
</feature>
<feature type="helix" evidence="11">
    <location>
        <begin position="123"/>
        <end position="125"/>
    </location>
</feature>
<feature type="strand" evidence="11">
    <location>
        <begin position="128"/>
        <end position="130"/>
    </location>
</feature>
<feature type="helix" evidence="11">
    <location>
        <begin position="148"/>
        <end position="150"/>
    </location>
</feature>
<feature type="strand" evidence="11">
    <location>
        <begin position="153"/>
        <end position="156"/>
    </location>
</feature>
<feature type="helix" evidence="11">
    <location>
        <begin position="158"/>
        <end position="162"/>
    </location>
</feature>
<feature type="helix" evidence="11">
    <location>
        <begin position="170"/>
        <end position="172"/>
    </location>
</feature>
<feature type="helix" evidence="11">
    <location>
        <begin position="176"/>
        <end position="179"/>
    </location>
</feature>
<feature type="helix" evidence="11">
    <location>
        <begin position="182"/>
        <end position="191"/>
    </location>
</feature>
<feature type="strand" evidence="11">
    <location>
        <begin position="195"/>
        <end position="199"/>
    </location>
</feature>
<feature type="strand" evidence="11">
    <location>
        <begin position="202"/>
        <end position="204"/>
    </location>
</feature>
<feature type="helix" evidence="11">
    <location>
        <begin position="208"/>
        <end position="211"/>
    </location>
</feature>
<feature type="turn" evidence="11">
    <location>
        <begin position="212"/>
        <end position="214"/>
    </location>
</feature>
<feature type="strand" evidence="11">
    <location>
        <begin position="223"/>
        <end position="229"/>
    </location>
</feature>
<feature type="helix" evidence="11">
    <location>
        <begin position="231"/>
        <end position="233"/>
    </location>
</feature>
<feature type="helix" evidence="11">
    <location>
        <begin position="237"/>
        <end position="239"/>
    </location>
</feature>
<feature type="helix" evidence="11">
    <location>
        <begin position="240"/>
        <end position="253"/>
    </location>
</feature>
<feature type="strand" evidence="11">
    <location>
        <begin position="257"/>
        <end position="262"/>
    </location>
</feature>
<feature type="helix" evidence="11">
    <location>
        <begin position="279"/>
        <end position="287"/>
    </location>
</feature>
<feature type="strand" evidence="11">
    <location>
        <begin position="294"/>
        <end position="296"/>
    </location>
</feature>
<feature type="strand" evidence="11">
    <location>
        <begin position="299"/>
        <end position="303"/>
    </location>
</feature>
<feature type="helix" evidence="11">
    <location>
        <begin position="311"/>
        <end position="326"/>
    </location>
</feature>
<feature type="strand" evidence="11">
    <location>
        <begin position="332"/>
        <end position="335"/>
    </location>
</feature>
<feature type="turn" evidence="11">
    <location>
        <begin position="336"/>
        <end position="338"/>
    </location>
</feature>
<feature type="helix" evidence="11">
    <location>
        <begin position="339"/>
        <end position="342"/>
    </location>
</feature>
<feature type="strand" evidence="11">
    <location>
        <begin position="343"/>
        <end position="347"/>
    </location>
</feature>
<feature type="helix" evidence="11">
    <location>
        <begin position="352"/>
        <end position="359"/>
    </location>
</feature>
<feature type="helix" evidence="11">
    <location>
        <begin position="363"/>
        <end position="365"/>
    </location>
</feature>
<feature type="strand" evidence="11">
    <location>
        <begin position="366"/>
        <end position="370"/>
    </location>
</feature>
<feature type="strand" evidence="11">
    <location>
        <begin position="389"/>
        <end position="392"/>
    </location>
</feature>
<feature type="helix" evidence="11">
    <location>
        <begin position="394"/>
        <end position="405"/>
    </location>
</feature>
<feature type="helix" evidence="11">
    <location>
        <begin position="411"/>
        <end position="418"/>
    </location>
</feature>
<feature type="helix" evidence="11">
    <location>
        <begin position="422"/>
        <end position="425"/>
    </location>
</feature>
<feature type="helix" evidence="11">
    <location>
        <begin position="432"/>
        <end position="434"/>
    </location>
</feature>
<feature type="strand" evidence="11">
    <location>
        <begin position="435"/>
        <end position="437"/>
    </location>
</feature>
<feature type="strand" evidence="11">
    <location>
        <begin position="442"/>
        <end position="444"/>
    </location>
</feature>
<feature type="helix" evidence="11">
    <location>
        <begin position="447"/>
        <end position="450"/>
    </location>
</feature>
<feature type="helix" evidence="11">
    <location>
        <begin position="459"/>
        <end position="461"/>
    </location>
</feature>
<feature type="strand" evidence="11">
    <location>
        <begin position="479"/>
        <end position="482"/>
    </location>
</feature>
<feature type="helix" evidence="11">
    <location>
        <begin position="486"/>
        <end position="505"/>
    </location>
</feature>
<feature type="strand" evidence="11">
    <location>
        <begin position="506"/>
        <end position="513"/>
    </location>
</feature>
<feature type="turn" evidence="11">
    <location>
        <begin position="514"/>
        <end position="519"/>
    </location>
</feature>
<feature type="turn" evidence="11">
    <location>
        <begin position="534"/>
        <end position="536"/>
    </location>
</feature>
<feature type="helix" evidence="11">
    <location>
        <begin position="540"/>
        <end position="542"/>
    </location>
</feature>
<feature type="helix" evidence="11">
    <location>
        <begin position="545"/>
        <end position="558"/>
    </location>
</feature>
<feature type="helix" evidence="11">
    <location>
        <begin position="562"/>
        <end position="565"/>
    </location>
</feature>
<feature type="strand" evidence="11">
    <location>
        <begin position="574"/>
        <end position="580"/>
    </location>
</feature>
<feature type="strand" evidence="11">
    <location>
        <begin position="584"/>
        <end position="586"/>
    </location>
</feature>
<feature type="helix" evidence="11">
    <location>
        <begin position="589"/>
        <end position="594"/>
    </location>
</feature>
<feature type="strand" evidence="11">
    <location>
        <begin position="597"/>
        <end position="603"/>
    </location>
</feature>
<feature type="turn" evidence="11">
    <location>
        <begin position="604"/>
        <end position="606"/>
    </location>
</feature>
<feature type="strand" evidence="11">
    <location>
        <begin position="607"/>
        <end position="612"/>
    </location>
</feature>
<feature type="strand" evidence="11">
    <location>
        <begin position="614"/>
        <end position="616"/>
    </location>
</feature>
<feature type="strand" evidence="11">
    <location>
        <begin position="618"/>
        <end position="621"/>
    </location>
</feature>
<feature type="strand" evidence="11">
    <location>
        <begin position="643"/>
        <end position="647"/>
    </location>
</feature>
<feature type="strand" evidence="11">
    <location>
        <begin position="651"/>
        <end position="656"/>
    </location>
</feature>